<geneLocation type="chloroplast"/>
<reference key="1">
    <citation type="submission" date="2007-03" db="EMBL/GenBank/DDBJ databases">
        <title>Sequencing analysis of Lobularia maritima chloroplast DNA.</title>
        <authorList>
            <person name="Hosouchi T."/>
            <person name="Tsuruoka H."/>
            <person name="Kotani H."/>
        </authorList>
    </citation>
    <scope>NUCLEOTIDE SEQUENCE [LARGE SCALE GENOMIC DNA]</scope>
</reference>
<dbReference type="EMBL" id="AP009375">
    <property type="protein sequence ID" value="BAF50542.1"/>
    <property type="molecule type" value="Genomic_DNA"/>
</dbReference>
<dbReference type="RefSeq" id="YP_001123718.1">
    <property type="nucleotide sequence ID" value="NC_009274.1"/>
</dbReference>
<dbReference type="SMR" id="A4QLI7"/>
<dbReference type="GeneID" id="4964850"/>
<dbReference type="GO" id="GO:0009535">
    <property type="term" value="C:chloroplast thylakoid membrane"/>
    <property type="evidence" value="ECO:0007669"/>
    <property type="project" value="UniProtKB-SubCell"/>
</dbReference>
<dbReference type="GO" id="GO:0009512">
    <property type="term" value="C:cytochrome b6f complex"/>
    <property type="evidence" value="ECO:0007669"/>
    <property type="project" value="InterPro"/>
</dbReference>
<dbReference type="GO" id="GO:0045158">
    <property type="term" value="F:electron transporter, transferring electrons within cytochrome b6/f complex of photosystem II activity"/>
    <property type="evidence" value="ECO:0007669"/>
    <property type="project" value="InterPro"/>
</dbReference>
<dbReference type="GO" id="GO:0017004">
    <property type="term" value="P:cytochrome complex assembly"/>
    <property type="evidence" value="ECO:0007669"/>
    <property type="project" value="UniProtKB-UniRule"/>
</dbReference>
<dbReference type="GO" id="GO:0015979">
    <property type="term" value="P:photosynthesis"/>
    <property type="evidence" value="ECO:0007669"/>
    <property type="project" value="UniProtKB-KW"/>
</dbReference>
<dbReference type="HAMAP" id="MF_00395">
    <property type="entry name" value="Cytb6_f_PetN"/>
    <property type="match status" value="1"/>
</dbReference>
<dbReference type="InterPro" id="IPR036143">
    <property type="entry name" value="Cytochr_b6-f_cplx_su8_sf"/>
</dbReference>
<dbReference type="InterPro" id="IPR005497">
    <property type="entry name" value="Cytochrome_b6-f_cplx_su8"/>
</dbReference>
<dbReference type="Pfam" id="PF03742">
    <property type="entry name" value="PetN"/>
    <property type="match status" value="1"/>
</dbReference>
<dbReference type="SUPFAM" id="SSF103451">
    <property type="entry name" value="PetN subunit of the cytochrome b6f complex"/>
    <property type="match status" value="1"/>
</dbReference>
<evidence type="ECO:0000255" key="1">
    <source>
        <dbReference type="HAMAP-Rule" id="MF_00395"/>
    </source>
</evidence>
<feature type="chain" id="PRO_0000355447" description="Cytochrome b6-f complex subunit 8">
    <location>
        <begin position="1"/>
        <end position="29"/>
    </location>
</feature>
<feature type="transmembrane region" description="Helical" evidence="1">
    <location>
        <begin position="3"/>
        <end position="23"/>
    </location>
</feature>
<proteinExistence type="inferred from homology"/>
<comment type="function">
    <text evidence="1">Component of the cytochrome b6-f complex, which mediates electron transfer between photosystem II (PSII) and photosystem I (PSI), cyclic electron flow around PSI, and state transitions.</text>
</comment>
<comment type="subunit">
    <text evidence="1">The 4 large subunits of the cytochrome b6-f complex are cytochrome b6, subunit IV (17 kDa polypeptide, PetD), cytochrome f and the Rieske protein, while the 4 small subunits are PetG, PetL, PetM and PetN. The complex functions as a dimer.</text>
</comment>
<comment type="subcellular location">
    <subcellularLocation>
        <location evidence="1">Plastid</location>
        <location evidence="1">Chloroplast thylakoid membrane</location>
        <topology evidence="1">Single-pass membrane protein</topology>
    </subcellularLocation>
</comment>
<comment type="similarity">
    <text evidence="1">Belongs to the PetN family.</text>
</comment>
<sequence length="29" mass="3156">MDIVSLAWAGLMVVFTFSLSLVVWGRSGL</sequence>
<organism>
    <name type="scientific">Lobularia maritima</name>
    <name type="common">Sweet alyssum</name>
    <name type="synonym">Alyssum maritimum</name>
    <dbReference type="NCBI Taxonomy" id="226051"/>
    <lineage>
        <taxon>Eukaryota</taxon>
        <taxon>Viridiplantae</taxon>
        <taxon>Streptophyta</taxon>
        <taxon>Embryophyta</taxon>
        <taxon>Tracheophyta</taxon>
        <taxon>Spermatophyta</taxon>
        <taxon>Magnoliopsida</taxon>
        <taxon>eudicotyledons</taxon>
        <taxon>Gunneridae</taxon>
        <taxon>Pentapetalae</taxon>
        <taxon>rosids</taxon>
        <taxon>malvids</taxon>
        <taxon>Brassicales</taxon>
        <taxon>Brassicaceae</taxon>
        <taxon>Anastaticeae</taxon>
        <taxon>Lobularia</taxon>
    </lineage>
</organism>
<keyword id="KW-0150">Chloroplast</keyword>
<keyword id="KW-0249">Electron transport</keyword>
<keyword id="KW-0472">Membrane</keyword>
<keyword id="KW-0602">Photosynthesis</keyword>
<keyword id="KW-0934">Plastid</keyword>
<keyword id="KW-0793">Thylakoid</keyword>
<keyword id="KW-0812">Transmembrane</keyword>
<keyword id="KW-1133">Transmembrane helix</keyword>
<keyword id="KW-0813">Transport</keyword>
<gene>
    <name evidence="1" type="primary">petN</name>
</gene>
<protein>
    <recommendedName>
        <fullName evidence="1">Cytochrome b6-f complex subunit 8</fullName>
    </recommendedName>
    <alternativeName>
        <fullName evidence="1">Cytochrome b6-f complex subunit PetN</fullName>
    </alternativeName>
    <alternativeName>
        <fullName evidence="1">Cytochrome b6-f complex subunit VIII</fullName>
    </alternativeName>
</protein>
<name>PETN_LOBMA</name>
<accession>A4QLI7</accession>